<proteinExistence type="inferred from homology"/>
<protein>
    <recommendedName>
        <fullName evidence="1">Ribosome maturation factor RimP</fullName>
    </recommendedName>
</protein>
<dbReference type="EMBL" id="CP001601">
    <property type="protein sequence ID" value="ACP33126.1"/>
    <property type="molecule type" value="Genomic_DNA"/>
</dbReference>
<dbReference type="RefSeq" id="WP_010190338.1">
    <property type="nucleotide sequence ID" value="NC_012590.1"/>
</dbReference>
<dbReference type="SMR" id="C3PH22"/>
<dbReference type="STRING" id="548476.cauri_1533"/>
<dbReference type="GeneID" id="31924163"/>
<dbReference type="KEGG" id="car:cauri_1533"/>
<dbReference type="eggNOG" id="COG0779">
    <property type="taxonomic scope" value="Bacteria"/>
</dbReference>
<dbReference type="HOGENOM" id="CLU_070525_3_0_11"/>
<dbReference type="OrthoDB" id="9805006at2"/>
<dbReference type="Proteomes" id="UP000002077">
    <property type="component" value="Chromosome"/>
</dbReference>
<dbReference type="GO" id="GO:0005829">
    <property type="term" value="C:cytosol"/>
    <property type="evidence" value="ECO:0007669"/>
    <property type="project" value="TreeGrafter"/>
</dbReference>
<dbReference type="GO" id="GO:0000028">
    <property type="term" value="P:ribosomal small subunit assembly"/>
    <property type="evidence" value="ECO:0007669"/>
    <property type="project" value="TreeGrafter"/>
</dbReference>
<dbReference type="GO" id="GO:0006412">
    <property type="term" value="P:translation"/>
    <property type="evidence" value="ECO:0007669"/>
    <property type="project" value="TreeGrafter"/>
</dbReference>
<dbReference type="Gene3D" id="3.30.300.70">
    <property type="entry name" value="RimP-like superfamily, N-terminal"/>
    <property type="match status" value="1"/>
</dbReference>
<dbReference type="HAMAP" id="MF_01077">
    <property type="entry name" value="RimP"/>
    <property type="match status" value="1"/>
</dbReference>
<dbReference type="InterPro" id="IPR003728">
    <property type="entry name" value="Ribosome_maturation_RimP"/>
</dbReference>
<dbReference type="InterPro" id="IPR028989">
    <property type="entry name" value="RimP_N"/>
</dbReference>
<dbReference type="InterPro" id="IPR035956">
    <property type="entry name" value="RimP_N_sf"/>
</dbReference>
<dbReference type="NCBIfam" id="NF000930">
    <property type="entry name" value="PRK00092.2-2"/>
    <property type="match status" value="1"/>
</dbReference>
<dbReference type="PANTHER" id="PTHR33867">
    <property type="entry name" value="RIBOSOME MATURATION FACTOR RIMP"/>
    <property type="match status" value="1"/>
</dbReference>
<dbReference type="PANTHER" id="PTHR33867:SF1">
    <property type="entry name" value="RIBOSOME MATURATION FACTOR RIMP"/>
    <property type="match status" value="1"/>
</dbReference>
<dbReference type="Pfam" id="PF02576">
    <property type="entry name" value="RimP_N"/>
    <property type="match status" value="1"/>
</dbReference>
<dbReference type="SUPFAM" id="SSF75420">
    <property type="entry name" value="YhbC-like, N-terminal domain"/>
    <property type="match status" value="1"/>
</dbReference>
<reference key="1">
    <citation type="journal article" date="2010" name="BMC Genomics">
        <title>Complete genome sequence and lifestyle of black-pigmented Corynebacterium aurimucosum ATCC 700975 (formerly C. nigricans CN-1) isolated from a vaginal swab of a woman with spontaneous abortion.</title>
        <authorList>
            <person name="Trost E."/>
            <person name="Gotker S."/>
            <person name="Schneider J."/>
            <person name="Schneiker-Bekel S."/>
            <person name="Szczepanowski R."/>
            <person name="Tilker A."/>
            <person name="Viehoever P."/>
            <person name="Arnold W."/>
            <person name="Bekel T."/>
            <person name="Blom J."/>
            <person name="Gartemann K.H."/>
            <person name="Linke B."/>
            <person name="Goesmann A."/>
            <person name="Puhler A."/>
            <person name="Shukla S.K."/>
            <person name="Tauch A."/>
        </authorList>
    </citation>
    <scope>NUCLEOTIDE SEQUENCE [LARGE SCALE GENOMIC DNA]</scope>
    <source>
        <strain>ATCC 700975 / DSM 44827 / CIP 107346 / CN-1</strain>
    </source>
</reference>
<keyword id="KW-0963">Cytoplasm</keyword>
<keyword id="KW-1185">Reference proteome</keyword>
<keyword id="KW-0690">Ribosome biogenesis</keyword>
<comment type="function">
    <text evidence="1">Required for maturation of 30S ribosomal subunits.</text>
</comment>
<comment type="subcellular location">
    <subcellularLocation>
        <location evidence="1">Cytoplasm</location>
    </subcellularLocation>
</comment>
<comment type="similarity">
    <text evidence="1">Belongs to the RimP family.</text>
</comment>
<evidence type="ECO:0000255" key="1">
    <source>
        <dbReference type="HAMAP-Rule" id="MF_01077"/>
    </source>
</evidence>
<accession>C3PH22</accession>
<organism>
    <name type="scientific">Corynebacterium aurimucosum (strain ATCC 700975 / DSM 44827 / CIP 107346 / CN-1)</name>
    <name type="common">Corynebacterium nigricans</name>
    <dbReference type="NCBI Taxonomy" id="548476"/>
    <lineage>
        <taxon>Bacteria</taxon>
        <taxon>Bacillati</taxon>
        <taxon>Actinomycetota</taxon>
        <taxon>Actinomycetes</taxon>
        <taxon>Mycobacteriales</taxon>
        <taxon>Corynebacteriaceae</taxon>
        <taxon>Corynebacterium</taxon>
    </lineage>
</organism>
<name>RIMP_CORA7</name>
<gene>
    <name evidence="1" type="primary">rimP</name>
    <name type="ordered locus">cauri_1533</name>
</gene>
<feature type="chain" id="PRO_1000149789" description="Ribosome maturation factor RimP">
    <location>
        <begin position="1"/>
        <end position="188"/>
    </location>
</feature>
<sequence>MAFPTPAQLTEILQPVAAARGLDIEDVKTTRAGKKSQVIIRIDGDERPSSDLIEELSQEISEIFDAQEEAGTLNFGAGYTLEVSTPGVDFPLSASRHWRRNQGRLVGYALAEEPGTTRVARIGALSEDEESVALITMVKKEVRYQIERLENLSRAVVEIEFAQPSAVELEAAMQTFDFAEQNSATRED</sequence>